<comment type="function">
    <text evidence="1">Catalyzes the transfer of endogenously produced octanoic acid from octanoyl-acyl-carrier-protein onto the lipoyl domains of lipoate-dependent enzymes. Lipoyl-ACP can also act as a substrate although octanoyl-ACP is likely to be the physiological substrate.</text>
</comment>
<comment type="catalytic activity">
    <reaction evidence="1">
        <text>octanoyl-[ACP] + L-lysyl-[protein] = N(6)-octanoyl-L-lysyl-[protein] + holo-[ACP] + H(+)</text>
        <dbReference type="Rhea" id="RHEA:17665"/>
        <dbReference type="Rhea" id="RHEA-COMP:9636"/>
        <dbReference type="Rhea" id="RHEA-COMP:9685"/>
        <dbReference type="Rhea" id="RHEA-COMP:9752"/>
        <dbReference type="Rhea" id="RHEA-COMP:9928"/>
        <dbReference type="ChEBI" id="CHEBI:15378"/>
        <dbReference type="ChEBI" id="CHEBI:29969"/>
        <dbReference type="ChEBI" id="CHEBI:64479"/>
        <dbReference type="ChEBI" id="CHEBI:78463"/>
        <dbReference type="ChEBI" id="CHEBI:78809"/>
        <dbReference type="EC" id="2.3.1.181"/>
    </reaction>
</comment>
<comment type="pathway">
    <text evidence="1">Protein modification; protein lipoylation via endogenous pathway; protein N(6)-(lipoyl)lysine from octanoyl-[acyl-carrier-protein]: step 1/2.</text>
</comment>
<comment type="subcellular location">
    <subcellularLocation>
        <location evidence="1">Cytoplasm</location>
    </subcellularLocation>
</comment>
<comment type="miscellaneous">
    <text evidence="1">In the reaction, the free carboxyl group of octanoic acid is attached via an amide linkage to the epsilon-amino group of a specific lysine residue of lipoyl domains of lipoate-dependent enzymes.</text>
</comment>
<comment type="similarity">
    <text evidence="1">Belongs to the LipB family.</text>
</comment>
<sequence length="205" mass="23823">MTEWLISNQFTDYNHSVKFMEAKIQQIYNNLSDELVWLLQHPPLYTAGIGATDDDIIEKLFPIYKTGRGGKYTYHGPGQRIIYLMLNLKKRNKCDIKLYIRDLSNWIINVLKHFNILGEFKEDRIGIWVNNKGVEEKIAAFGIRLRKWVTYHGIALNVSPNLSHYEGIIPCGLKDYGVTSMEKLGVKVSLCELDDILKQEFHKIF</sequence>
<protein>
    <recommendedName>
        <fullName evidence="1">Octanoyltransferase</fullName>
        <ecNumber evidence="1">2.3.1.181</ecNumber>
    </recommendedName>
    <alternativeName>
        <fullName evidence="1">Lipoate-protein ligase B</fullName>
    </alternativeName>
    <alternativeName>
        <fullName evidence="1">Lipoyl/octanoyl transferase</fullName>
    </alternativeName>
    <alternativeName>
        <fullName evidence="1">Octanoyl-[acyl-carrier-protein]-protein N-octanoyltransferase</fullName>
    </alternativeName>
</protein>
<name>LIPB_WOLPP</name>
<keyword id="KW-0012">Acyltransferase</keyword>
<keyword id="KW-0963">Cytoplasm</keyword>
<keyword id="KW-0808">Transferase</keyword>
<reference key="1">
    <citation type="journal article" date="2008" name="Mol. Biol. Evol.">
        <title>Genome evolution of Wolbachia strain wPip from the Culex pipiens group.</title>
        <authorList>
            <person name="Klasson L."/>
            <person name="Walker T."/>
            <person name="Sebaihia M."/>
            <person name="Sanders M.J."/>
            <person name="Quail M.A."/>
            <person name="Lord A."/>
            <person name="Sanders S."/>
            <person name="Earl J."/>
            <person name="O'Neill S.L."/>
            <person name="Thomson N."/>
            <person name="Sinkins S.P."/>
            <person name="Parkhill J."/>
        </authorList>
    </citation>
    <scope>NUCLEOTIDE SEQUENCE [LARGE SCALE GENOMIC DNA]</scope>
    <source>
        <strain>wPip</strain>
    </source>
</reference>
<feature type="chain" id="PRO_1000089481" description="Octanoyltransferase">
    <location>
        <begin position="1"/>
        <end position="205"/>
    </location>
</feature>
<feature type="domain" description="BPL/LPL catalytic" evidence="2">
    <location>
        <begin position="30"/>
        <end position="205"/>
    </location>
</feature>
<feature type="active site" description="Acyl-thioester intermediate" evidence="1">
    <location>
        <position position="171"/>
    </location>
</feature>
<feature type="binding site" evidence="1">
    <location>
        <begin position="68"/>
        <end position="75"/>
    </location>
    <ligand>
        <name>substrate</name>
    </ligand>
</feature>
<feature type="binding site" evidence="1">
    <location>
        <begin position="140"/>
        <end position="142"/>
    </location>
    <ligand>
        <name>substrate</name>
    </ligand>
</feature>
<feature type="binding site" evidence="1">
    <location>
        <begin position="153"/>
        <end position="155"/>
    </location>
    <ligand>
        <name>substrate</name>
    </ligand>
</feature>
<feature type="site" description="Lowers pKa of active site Cys" evidence="1">
    <location>
        <position position="137"/>
    </location>
</feature>
<proteinExistence type="inferred from homology"/>
<accession>B3CLJ0</accession>
<evidence type="ECO:0000255" key="1">
    <source>
        <dbReference type="HAMAP-Rule" id="MF_00013"/>
    </source>
</evidence>
<evidence type="ECO:0000255" key="2">
    <source>
        <dbReference type="PROSITE-ProRule" id="PRU01067"/>
    </source>
</evidence>
<organism>
    <name type="scientific">Wolbachia pipientis subsp. Culex pipiens (strain wPip)</name>
    <dbReference type="NCBI Taxonomy" id="570417"/>
    <lineage>
        <taxon>Bacteria</taxon>
        <taxon>Pseudomonadati</taxon>
        <taxon>Pseudomonadota</taxon>
        <taxon>Alphaproteobacteria</taxon>
        <taxon>Rickettsiales</taxon>
        <taxon>Anaplasmataceae</taxon>
        <taxon>Wolbachieae</taxon>
        <taxon>Wolbachia</taxon>
    </lineage>
</organism>
<dbReference type="EC" id="2.3.1.181" evidence="1"/>
<dbReference type="EMBL" id="AM999887">
    <property type="protein sequence ID" value="CAQ54758.1"/>
    <property type="molecule type" value="Genomic_DNA"/>
</dbReference>
<dbReference type="RefSeq" id="WP_007302072.1">
    <property type="nucleotide sequence ID" value="NC_010981.1"/>
</dbReference>
<dbReference type="SMR" id="B3CLJ0"/>
<dbReference type="KEGG" id="wpi:WP0650"/>
<dbReference type="eggNOG" id="COG0321">
    <property type="taxonomic scope" value="Bacteria"/>
</dbReference>
<dbReference type="HOGENOM" id="CLU_035168_3_0_5"/>
<dbReference type="UniPathway" id="UPA00538">
    <property type="reaction ID" value="UER00592"/>
</dbReference>
<dbReference type="Proteomes" id="UP000008814">
    <property type="component" value="Chromosome"/>
</dbReference>
<dbReference type="GO" id="GO:0005737">
    <property type="term" value="C:cytoplasm"/>
    <property type="evidence" value="ECO:0007669"/>
    <property type="project" value="UniProtKB-SubCell"/>
</dbReference>
<dbReference type="GO" id="GO:0033819">
    <property type="term" value="F:lipoyl(octanoyl) transferase activity"/>
    <property type="evidence" value="ECO:0007669"/>
    <property type="project" value="UniProtKB-EC"/>
</dbReference>
<dbReference type="GO" id="GO:0036211">
    <property type="term" value="P:protein modification process"/>
    <property type="evidence" value="ECO:0007669"/>
    <property type="project" value="InterPro"/>
</dbReference>
<dbReference type="CDD" id="cd16444">
    <property type="entry name" value="LipB"/>
    <property type="match status" value="1"/>
</dbReference>
<dbReference type="Gene3D" id="3.30.930.10">
    <property type="entry name" value="Bira Bifunctional Protein, Domain 2"/>
    <property type="match status" value="1"/>
</dbReference>
<dbReference type="HAMAP" id="MF_00013">
    <property type="entry name" value="LipB"/>
    <property type="match status" value="1"/>
</dbReference>
<dbReference type="InterPro" id="IPR045864">
    <property type="entry name" value="aa-tRNA-synth_II/BPL/LPL"/>
</dbReference>
<dbReference type="InterPro" id="IPR004143">
    <property type="entry name" value="BPL_LPL_catalytic"/>
</dbReference>
<dbReference type="InterPro" id="IPR000544">
    <property type="entry name" value="Octanoyltransferase"/>
</dbReference>
<dbReference type="InterPro" id="IPR020605">
    <property type="entry name" value="Octanoyltransferase_CS"/>
</dbReference>
<dbReference type="NCBIfam" id="TIGR00214">
    <property type="entry name" value="lipB"/>
    <property type="match status" value="1"/>
</dbReference>
<dbReference type="NCBIfam" id="NF010921">
    <property type="entry name" value="PRK14341.1"/>
    <property type="match status" value="1"/>
</dbReference>
<dbReference type="PANTHER" id="PTHR10993:SF7">
    <property type="entry name" value="LIPOYLTRANSFERASE 2, MITOCHONDRIAL-RELATED"/>
    <property type="match status" value="1"/>
</dbReference>
<dbReference type="PANTHER" id="PTHR10993">
    <property type="entry name" value="OCTANOYLTRANSFERASE"/>
    <property type="match status" value="1"/>
</dbReference>
<dbReference type="Pfam" id="PF21948">
    <property type="entry name" value="LplA-B_cat"/>
    <property type="match status" value="1"/>
</dbReference>
<dbReference type="PIRSF" id="PIRSF016262">
    <property type="entry name" value="LPLase"/>
    <property type="match status" value="1"/>
</dbReference>
<dbReference type="SUPFAM" id="SSF55681">
    <property type="entry name" value="Class II aaRS and biotin synthetases"/>
    <property type="match status" value="1"/>
</dbReference>
<dbReference type="PROSITE" id="PS51733">
    <property type="entry name" value="BPL_LPL_CATALYTIC"/>
    <property type="match status" value="1"/>
</dbReference>
<dbReference type="PROSITE" id="PS01313">
    <property type="entry name" value="LIPB"/>
    <property type="match status" value="1"/>
</dbReference>
<gene>
    <name evidence="1" type="primary">lipB</name>
    <name type="ordered locus">WP0650</name>
</gene>